<organism>
    <name type="scientific">Drosophila ananassae</name>
    <name type="common">Fruit fly</name>
    <dbReference type="NCBI Taxonomy" id="7217"/>
    <lineage>
        <taxon>Eukaryota</taxon>
        <taxon>Metazoa</taxon>
        <taxon>Ecdysozoa</taxon>
        <taxon>Arthropoda</taxon>
        <taxon>Hexapoda</taxon>
        <taxon>Insecta</taxon>
        <taxon>Pterygota</taxon>
        <taxon>Neoptera</taxon>
        <taxon>Endopterygota</taxon>
        <taxon>Diptera</taxon>
        <taxon>Brachycera</taxon>
        <taxon>Muscomorpha</taxon>
        <taxon>Ephydroidea</taxon>
        <taxon>Drosophilidae</taxon>
        <taxon>Drosophila</taxon>
        <taxon>Sophophora</taxon>
    </lineage>
</organism>
<keyword id="KW-0677">Repeat</keyword>
<keyword id="KW-0853">WD repeat</keyword>
<dbReference type="EMBL" id="EU362855">
    <property type="protein sequence ID" value="ABY59794.1"/>
    <property type="status" value="ALT_INIT"/>
    <property type="molecule type" value="mRNA"/>
</dbReference>
<dbReference type="EMBL" id="AAPP01000240">
    <property type="status" value="NOT_ANNOTATED_CDS"/>
    <property type="molecule type" value="Genomic_DNA"/>
</dbReference>
<dbReference type="EMBL" id="AAPP01011194">
    <property type="status" value="NOT_ANNOTATED_CDS"/>
    <property type="molecule type" value="Genomic_DNA"/>
</dbReference>
<dbReference type="EMBL" id="AAPP01017377">
    <property type="status" value="NOT_ANNOTATED_CDS"/>
    <property type="molecule type" value="Genomic_DNA"/>
</dbReference>
<dbReference type="EMBL" id="AAPP01018149">
    <property type="status" value="NOT_ANNOTATED_CDS"/>
    <property type="molecule type" value="Genomic_DNA"/>
</dbReference>
<dbReference type="EnsemblMetazoa" id="FBtr0391054">
    <property type="protein sequence ID" value="FBpp0350538"/>
    <property type="gene ID" value="FBgn0275370"/>
</dbReference>
<dbReference type="EnsemblMetazoa" id="XM_032456079.2">
    <property type="protein sequence ID" value="XP_032311970.2"/>
    <property type="gene ID" value="LOC116656451"/>
</dbReference>
<dbReference type="InParanoid" id="B0FXQ5"/>
<dbReference type="OrthoDB" id="5980302at2759"/>
<dbReference type="ChiTaRS" id="WDY">
    <property type="organism name" value="fly"/>
</dbReference>
<dbReference type="Gene3D" id="1.10.238.10">
    <property type="entry name" value="EF-hand"/>
    <property type="match status" value="1"/>
</dbReference>
<dbReference type="Gene3D" id="2.130.10.10">
    <property type="entry name" value="YVTN repeat-like/Quinoprotein amine dehydrogenase"/>
    <property type="match status" value="2"/>
</dbReference>
<dbReference type="InterPro" id="IPR011992">
    <property type="entry name" value="EF-hand-dom_pair"/>
</dbReference>
<dbReference type="InterPro" id="IPR011047">
    <property type="entry name" value="Quinoprotein_ADH-like_sf"/>
</dbReference>
<dbReference type="InterPro" id="IPR051242">
    <property type="entry name" value="WD-EF-hand_domain"/>
</dbReference>
<dbReference type="InterPro" id="IPR015943">
    <property type="entry name" value="WD40/YVTN_repeat-like_dom_sf"/>
</dbReference>
<dbReference type="InterPro" id="IPR036322">
    <property type="entry name" value="WD40_repeat_dom_sf"/>
</dbReference>
<dbReference type="InterPro" id="IPR001680">
    <property type="entry name" value="WD40_rpt"/>
</dbReference>
<dbReference type="PANTHER" id="PTHR44324:SF6">
    <property type="entry name" value="EF-HAND CALCIUM BINDING DOMAIN 8"/>
    <property type="match status" value="1"/>
</dbReference>
<dbReference type="PANTHER" id="PTHR44324">
    <property type="entry name" value="WD40 REPEAT DOMAIN 95"/>
    <property type="match status" value="1"/>
</dbReference>
<dbReference type="Pfam" id="PF00400">
    <property type="entry name" value="WD40"/>
    <property type="match status" value="2"/>
</dbReference>
<dbReference type="SMART" id="SM00320">
    <property type="entry name" value="WD40"/>
    <property type="match status" value="8"/>
</dbReference>
<dbReference type="SUPFAM" id="SSF47473">
    <property type="entry name" value="EF-hand"/>
    <property type="match status" value="1"/>
</dbReference>
<dbReference type="SUPFAM" id="SSF50998">
    <property type="entry name" value="Quinoprotein alcohol dehydrogenase-like"/>
    <property type="match status" value="1"/>
</dbReference>
<dbReference type="SUPFAM" id="SSF50978">
    <property type="entry name" value="WD40 repeat-like"/>
    <property type="match status" value="1"/>
</dbReference>
<dbReference type="PROSITE" id="PS00678">
    <property type="entry name" value="WD_REPEATS_1"/>
    <property type="match status" value="1"/>
</dbReference>
<dbReference type="PROSITE" id="PS50082">
    <property type="entry name" value="WD_REPEATS_2"/>
    <property type="match status" value="4"/>
</dbReference>
<dbReference type="PROSITE" id="PS50294">
    <property type="entry name" value="WD_REPEATS_REGION"/>
    <property type="match status" value="2"/>
</dbReference>
<comment type="sequence caution" evidence="5">
    <conflict type="erroneous initiation">
        <sequence resource="EMBL-CDS" id="ABY59794"/>
    </conflict>
</comment>
<accession>B0FXQ5</accession>
<name>WDY_DROAN</name>
<evidence type="ECO:0000255" key="1"/>
<evidence type="ECO:0000256" key="2">
    <source>
        <dbReference type="SAM" id="MobiDB-lite"/>
    </source>
</evidence>
<evidence type="ECO:0000269" key="3">
    <source>
    </source>
</evidence>
<evidence type="ECO:0000303" key="4">
    <source>
    </source>
</evidence>
<evidence type="ECO:0000305" key="5"/>
<evidence type="ECO:0000312" key="6">
    <source>
        <dbReference type="EMBL" id="ABY59794.1"/>
    </source>
</evidence>
<protein>
    <recommendedName>
        <fullName evidence="4 6">WD repeat-containing protein on Y chromosome</fullName>
        <shortName evidence="4">WD40 Y</shortName>
    </recommendedName>
</protein>
<sequence length="1064" mass="121415">MPMLIQKSEVEYQTISSTQSHLAEEQSERLHRCISKEQLEKLHEAFLNAPERQVGIDDLRVMLEDLDITFNDSMYTRLFLKINQNRDFRVDWNEFVSYLIFGFQEEDPSSQKESLILPISVPPMVRKSEHRSAICCLALLKAKSDQVPIEEVTETVNFSFGGEDSPEASGMWVTASHEGMMRFWTSHMEPIRTASSESIHLNYAFYNNGKVHSKLILGDYAGNVRILSYSPHLRGPFQAKPGAALIEVVWSDVLKGKIPQFVPKEYISLHNEMISCVYFSLHMNALFASAEYRNTKKYRGRCPGMIMVTYDERSNFRIPLGVSTFFVAESHNIVVTGGPDTFVRIWDVYIPTEPSAILTGHNGGIVLVFVQPEENKVYSVDYQKIIKVWDLQEHTLLQTYGDLVRLIHHSETDLTYYYHSHLRELVVAGRKLISIKCCPRVRVDLTDGNTHAAPVSVVLYNRLFRNIVTCGLDSYIIVWDPWTGRRKIIMKSCHTKMIYGEIIDIEITAACFDPLEQFLLTGARDGSLKIWNYNNAVVVRNMSIMPDQEVTSVIWVVDRILAMGWDRQVTEFNDVVGREYGDPKKWPKFHTDDITCADVKLGEGVVTATYSGEIIFWKLETGQPYRRYSVMDPTRFIELKLTAEEEKSLRRSKRLASRPTHTGIHGLQMSRAGRSTVTNRPEDNRDYGANIPISVQAVLFLQTRPQTLKHGSVFISLDTGYIQVYSHHQRGGYMMEFLAVHKTGDCVLTMCTDRKNRFLYTGTAFGYVKIWYIVNFCVPASEKTHVCMPKLRLEFIFLRKELFLTRAKRAIRNQPEPLLVSSYKGHLKAINSIAFINLPKIVFTGSHDYSCRLWTQGGRYLGTLGTVLPWSKLTPFERAGDDSQTYRMPPDIKKVASSTTLKVISGLQAERMVKRQEGKVTEDRDEDTAQTEDVTELKRLLDSPIKEPILGKHFELPGRTVLDQHIELDTSQSYIAVYTHLKVHSTEMLERLPTPAVIGKVQAENYLHHYVPVEGKVDISGSSLNIKQPTRRRSGKTHDPRNIRTAKARLDIGMGLSSSHASQQ</sequence>
<proteinExistence type="evidence at transcript level"/>
<gene>
    <name evidence="6" type="primary">WDY</name>
</gene>
<feature type="chain" id="PRO_0000377421" description="WD repeat-containing protein on Y chromosome">
    <location>
        <begin position="1"/>
        <end position="1064"/>
    </location>
</feature>
<feature type="repeat" description="WD 1" evidence="1">
    <location>
        <begin position="150"/>
        <end position="194"/>
    </location>
</feature>
<feature type="repeat" description="WD 2" evidence="1">
    <location>
        <begin position="317"/>
        <end position="356"/>
    </location>
</feature>
<feature type="repeat" description="WD 3" evidence="1">
    <location>
        <begin position="360"/>
        <end position="399"/>
    </location>
</feature>
<feature type="repeat" description="WD 4" evidence="1">
    <location>
        <begin position="450"/>
        <end position="489"/>
    </location>
</feature>
<feature type="repeat" description="WD 5" evidence="1">
    <location>
        <begin position="502"/>
        <end position="541"/>
    </location>
</feature>
<feature type="repeat" description="WD 6" evidence="1">
    <location>
        <begin position="589"/>
        <end position="629"/>
    </location>
</feature>
<feature type="repeat" description="WD 7" evidence="1">
    <location>
        <begin position="742"/>
        <end position="781"/>
    </location>
</feature>
<feature type="repeat" description="WD 8" evidence="1">
    <location>
        <begin position="825"/>
        <end position="864"/>
    </location>
</feature>
<feature type="region of interest" description="Disordered" evidence="2">
    <location>
        <begin position="1022"/>
        <end position="1044"/>
    </location>
</feature>
<reference evidence="6" key="1">
    <citation type="journal article" date="2008" name="Nature">
        <title>Low conservation of gene content in the Drosophila Y chromosome.</title>
        <authorList>
            <person name="Koerich L.B."/>
            <person name="Wang X."/>
            <person name="Clark A.G."/>
            <person name="Carvalho A.B."/>
        </authorList>
    </citation>
    <scope>NUCLEOTIDE SEQUENCE [MRNA]</scope>
</reference>
<reference evidence="5" key="2">
    <citation type="journal article" date="2007" name="Nature">
        <title>Evolution of genes and genomes on the Drosophila phylogeny.</title>
        <authorList>
            <consortium name="Drosophila 12 genomes consortium"/>
        </authorList>
    </citation>
    <scope>NUCLEOTIDE SEQUENCE [LARGE SCALE GENOMIC DNA]</scope>
    <source>
        <strain evidence="3">Tucson 14024-0371.13</strain>
    </source>
</reference>